<name>TRPA_SOLUE</name>
<evidence type="ECO:0000255" key="1">
    <source>
        <dbReference type="HAMAP-Rule" id="MF_00131"/>
    </source>
</evidence>
<sequence>MTRIGRLFDCLKRENRKALIAYLTAGDPTPDHTPGLVEALVRGGADLIELGVPFTDPIADGPVIQRAGERALKAGTTLASVLEIARKIRETSEVPLLLFTYLNPVLRYGLDRLGADAAAAGIDGCLLTDASVEEAESYVAAMHKHGLDTVFLAAPTSTARRIELVARYSTGFVYLVSRTGVTGERESLSASVAPLIQAVRAATDLPLAVGFGISKPEHVAELGSQVEAVVVGSAFVRLIEQNAESAALEIQLESFTRELKRGFGARA</sequence>
<gene>
    <name evidence="1" type="primary">trpA</name>
    <name type="ordered locus">Acid_7887</name>
</gene>
<accession>Q01NI9</accession>
<organism>
    <name type="scientific">Solibacter usitatus (strain Ellin6076)</name>
    <dbReference type="NCBI Taxonomy" id="234267"/>
    <lineage>
        <taxon>Bacteria</taxon>
        <taxon>Pseudomonadati</taxon>
        <taxon>Acidobacteriota</taxon>
        <taxon>Terriglobia</taxon>
        <taxon>Bryobacterales</taxon>
        <taxon>Solibacteraceae</taxon>
        <taxon>Candidatus Solibacter</taxon>
    </lineage>
</organism>
<comment type="function">
    <text evidence="1">The alpha subunit is responsible for the aldol cleavage of indoleglycerol phosphate to indole and glyceraldehyde 3-phosphate.</text>
</comment>
<comment type="catalytic activity">
    <reaction evidence="1">
        <text>(1S,2R)-1-C-(indol-3-yl)glycerol 3-phosphate + L-serine = D-glyceraldehyde 3-phosphate + L-tryptophan + H2O</text>
        <dbReference type="Rhea" id="RHEA:10532"/>
        <dbReference type="ChEBI" id="CHEBI:15377"/>
        <dbReference type="ChEBI" id="CHEBI:33384"/>
        <dbReference type="ChEBI" id="CHEBI:57912"/>
        <dbReference type="ChEBI" id="CHEBI:58866"/>
        <dbReference type="ChEBI" id="CHEBI:59776"/>
        <dbReference type="EC" id="4.2.1.20"/>
    </reaction>
</comment>
<comment type="pathway">
    <text evidence="1">Amino-acid biosynthesis; L-tryptophan biosynthesis; L-tryptophan from chorismate: step 5/5.</text>
</comment>
<comment type="subunit">
    <text evidence="1">Tetramer of two alpha and two beta chains.</text>
</comment>
<comment type="similarity">
    <text evidence="1">Belongs to the TrpA family.</text>
</comment>
<keyword id="KW-0028">Amino-acid biosynthesis</keyword>
<keyword id="KW-0057">Aromatic amino acid biosynthesis</keyword>
<keyword id="KW-0456">Lyase</keyword>
<keyword id="KW-0822">Tryptophan biosynthesis</keyword>
<feature type="chain" id="PRO_1000018286" description="Tryptophan synthase alpha chain">
    <location>
        <begin position="1"/>
        <end position="267"/>
    </location>
</feature>
<feature type="active site" description="Proton acceptor" evidence="1">
    <location>
        <position position="49"/>
    </location>
</feature>
<feature type="active site" description="Proton acceptor" evidence="1">
    <location>
        <position position="60"/>
    </location>
</feature>
<protein>
    <recommendedName>
        <fullName evidence="1">Tryptophan synthase alpha chain</fullName>
        <ecNumber evidence="1">4.2.1.20</ecNumber>
    </recommendedName>
</protein>
<dbReference type="EC" id="4.2.1.20" evidence="1"/>
<dbReference type="EMBL" id="CP000473">
    <property type="protein sequence ID" value="ABJ88781.1"/>
    <property type="molecule type" value="Genomic_DNA"/>
</dbReference>
<dbReference type="SMR" id="Q01NI9"/>
<dbReference type="FunCoup" id="Q01NI9">
    <property type="interactions" value="607"/>
</dbReference>
<dbReference type="STRING" id="234267.Acid_7887"/>
<dbReference type="KEGG" id="sus:Acid_7887"/>
<dbReference type="eggNOG" id="COG0159">
    <property type="taxonomic scope" value="Bacteria"/>
</dbReference>
<dbReference type="HOGENOM" id="CLU_016734_0_0_0"/>
<dbReference type="InParanoid" id="Q01NI9"/>
<dbReference type="OrthoDB" id="9804578at2"/>
<dbReference type="UniPathway" id="UPA00035">
    <property type="reaction ID" value="UER00044"/>
</dbReference>
<dbReference type="GO" id="GO:0005829">
    <property type="term" value="C:cytosol"/>
    <property type="evidence" value="ECO:0007669"/>
    <property type="project" value="TreeGrafter"/>
</dbReference>
<dbReference type="GO" id="GO:0004834">
    <property type="term" value="F:tryptophan synthase activity"/>
    <property type="evidence" value="ECO:0007669"/>
    <property type="project" value="UniProtKB-UniRule"/>
</dbReference>
<dbReference type="CDD" id="cd04724">
    <property type="entry name" value="Tryptophan_synthase_alpha"/>
    <property type="match status" value="1"/>
</dbReference>
<dbReference type="FunFam" id="3.20.20.70:FF:000037">
    <property type="entry name" value="Tryptophan synthase alpha chain"/>
    <property type="match status" value="1"/>
</dbReference>
<dbReference type="Gene3D" id="3.20.20.70">
    <property type="entry name" value="Aldolase class I"/>
    <property type="match status" value="1"/>
</dbReference>
<dbReference type="HAMAP" id="MF_00131">
    <property type="entry name" value="Trp_synth_alpha"/>
    <property type="match status" value="1"/>
</dbReference>
<dbReference type="InterPro" id="IPR013785">
    <property type="entry name" value="Aldolase_TIM"/>
</dbReference>
<dbReference type="InterPro" id="IPR011060">
    <property type="entry name" value="RibuloseP-bd_barrel"/>
</dbReference>
<dbReference type="InterPro" id="IPR018204">
    <property type="entry name" value="Trp_synthase_alpha_AS"/>
</dbReference>
<dbReference type="InterPro" id="IPR002028">
    <property type="entry name" value="Trp_synthase_suA"/>
</dbReference>
<dbReference type="NCBIfam" id="TIGR00262">
    <property type="entry name" value="trpA"/>
    <property type="match status" value="1"/>
</dbReference>
<dbReference type="PANTHER" id="PTHR43406:SF1">
    <property type="entry name" value="TRYPTOPHAN SYNTHASE ALPHA CHAIN, CHLOROPLASTIC"/>
    <property type="match status" value="1"/>
</dbReference>
<dbReference type="PANTHER" id="PTHR43406">
    <property type="entry name" value="TRYPTOPHAN SYNTHASE, ALPHA CHAIN"/>
    <property type="match status" value="1"/>
</dbReference>
<dbReference type="Pfam" id="PF00290">
    <property type="entry name" value="Trp_syntA"/>
    <property type="match status" value="1"/>
</dbReference>
<dbReference type="SUPFAM" id="SSF51366">
    <property type="entry name" value="Ribulose-phoshate binding barrel"/>
    <property type="match status" value="1"/>
</dbReference>
<dbReference type="PROSITE" id="PS00167">
    <property type="entry name" value="TRP_SYNTHASE_ALPHA"/>
    <property type="match status" value="1"/>
</dbReference>
<reference key="1">
    <citation type="journal article" date="2009" name="Appl. Environ. Microbiol.">
        <title>Three genomes from the phylum Acidobacteria provide insight into the lifestyles of these microorganisms in soils.</title>
        <authorList>
            <person name="Ward N.L."/>
            <person name="Challacombe J.F."/>
            <person name="Janssen P.H."/>
            <person name="Henrissat B."/>
            <person name="Coutinho P.M."/>
            <person name="Wu M."/>
            <person name="Xie G."/>
            <person name="Haft D.H."/>
            <person name="Sait M."/>
            <person name="Badger J."/>
            <person name="Barabote R.D."/>
            <person name="Bradley B."/>
            <person name="Brettin T.S."/>
            <person name="Brinkac L.M."/>
            <person name="Bruce D."/>
            <person name="Creasy T."/>
            <person name="Daugherty S.C."/>
            <person name="Davidsen T.M."/>
            <person name="DeBoy R.T."/>
            <person name="Detter J.C."/>
            <person name="Dodson R.J."/>
            <person name="Durkin A.S."/>
            <person name="Ganapathy A."/>
            <person name="Gwinn-Giglio M."/>
            <person name="Han C.S."/>
            <person name="Khouri H."/>
            <person name="Kiss H."/>
            <person name="Kothari S.P."/>
            <person name="Madupu R."/>
            <person name="Nelson K.E."/>
            <person name="Nelson W.C."/>
            <person name="Paulsen I."/>
            <person name="Penn K."/>
            <person name="Ren Q."/>
            <person name="Rosovitz M.J."/>
            <person name="Selengut J.D."/>
            <person name="Shrivastava S."/>
            <person name="Sullivan S.A."/>
            <person name="Tapia R."/>
            <person name="Thompson L.S."/>
            <person name="Watkins K.L."/>
            <person name="Yang Q."/>
            <person name="Yu C."/>
            <person name="Zafar N."/>
            <person name="Zhou L."/>
            <person name="Kuske C.R."/>
        </authorList>
    </citation>
    <scope>NUCLEOTIDE SEQUENCE [LARGE SCALE GENOMIC DNA]</scope>
    <source>
        <strain>Ellin6076</strain>
    </source>
</reference>
<proteinExistence type="inferred from homology"/>